<feature type="peptide" id="PRO_0000461733" description="Cryptide TyPep-12" evidence="1">
    <location>
        <begin position="1"/>
        <end position="7"/>
    </location>
</feature>
<evidence type="ECO:0000269" key="1">
    <source>
    </source>
</evidence>
<evidence type="ECO:0000303" key="2">
    <source>
    </source>
</evidence>
<evidence type="ECO:0000305" key="3">
    <source>
    </source>
</evidence>
<name>CRY12_TITSE</name>
<accession>P0DRE3</accession>
<comment type="function">
    <text evidence="1">In vivo, causes weak pain (but no edema formation), when injected in mice hind paws. Also induces discomfort and anxiety in mice, as it moderately increases rearing behavior (but has no effect on locomotion).</text>
</comment>
<comment type="subcellular location">
    <subcellularLocation>
        <location evidence="1">Secreted</location>
    </subcellularLocation>
</comment>
<comment type="tissue specificity">
    <text evidence="3">Expressed by the venom gland.</text>
</comment>
<comment type="mass spectrometry"/>
<reference key="1">
    <citation type="journal article" date="2024" name="J. Nat. Prod.">
        <title>Profiling the linear peptides of venom from the Brazilian scorpion Tityus serrulatus: structural and functional characterization.</title>
        <authorList>
            <person name="Dias N.B."/>
            <person name="de Souza B.M."/>
            <person name="Cid-Alda F."/>
            <person name="Dorce V.A.C."/>
            <person name="Cocchi F.K."/>
            <person name="Palma M.S."/>
        </authorList>
    </citation>
    <scope>PROTEIN SEQUENCE</scope>
    <scope>IDENTIFICATION BY MASS SPECTROMETRY</scope>
    <scope>MASS SPECTROMETRY</scope>
    <scope>SUBCELLULAR LOCATION</scope>
    <scope>SYNTHESIS</scope>
    <scope>FUNCTION</scope>
    <scope>BIOASSAY</scope>
    <source>
        <tissue>Venom</tissue>
    </source>
</reference>
<protein>
    <recommendedName>
        <fullName evidence="2">Cryptide TyPep-12</fullName>
    </recommendedName>
</protein>
<organism>
    <name type="scientific">Tityus serrulatus</name>
    <name type="common">Brazilian scorpion</name>
    <dbReference type="NCBI Taxonomy" id="6887"/>
    <lineage>
        <taxon>Eukaryota</taxon>
        <taxon>Metazoa</taxon>
        <taxon>Ecdysozoa</taxon>
        <taxon>Arthropoda</taxon>
        <taxon>Chelicerata</taxon>
        <taxon>Arachnida</taxon>
        <taxon>Scorpiones</taxon>
        <taxon>Buthida</taxon>
        <taxon>Buthoidea</taxon>
        <taxon>Buthidae</taxon>
        <taxon>Tityus</taxon>
    </lineage>
</organism>
<proteinExistence type="evidence at protein level"/>
<sequence>SESNTCG</sequence>
<dbReference type="GO" id="GO:0005576">
    <property type="term" value="C:extracellular region"/>
    <property type="evidence" value="ECO:0007669"/>
    <property type="project" value="UniProtKB-SubCell"/>
</dbReference>
<keyword id="KW-0903">Direct protein sequencing</keyword>
<keyword id="KW-0964">Secreted</keyword>